<evidence type="ECO:0000256" key="1">
    <source>
        <dbReference type="SAM" id="MobiDB-lite"/>
    </source>
</evidence>
<evidence type="ECO:0000305" key="2"/>
<reference key="1">
    <citation type="journal article" date="2005" name="J. Virol.">
        <title>Genomic sequence analysis of Epstein-Barr virus strain GD1 from a nasopharyngeal carcinoma patient.</title>
        <authorList>
            <person name="Zeng M.-S."/>
            <person name="Li D.-J."/>
            <person name="Liu Q.-L."/>
            <person name="Song L.-B."/>
            <person name="Li M.-Z."/>
            <person name="Zhang R.-H."/>
            <person name="Yu X.-J."/>
            <person name="Wang H.-M."/>
            <person name="Ernberg I."/>
            <person name="Zeng Y.-X."/>
        </authorList>
    </citation>
    <scope>NUCLEOTIDE SEQUENCE [LARGE SCALE GENOMIC DNA]</scope>
</reference>
<dbReference type="EMBL" id="AY961628">
    <property type="status" value="NOT_ANNOTATED_CDS"/>
    <property type="molecule type" value="Genomic_DNA"/>
</dbReference>
<dbReference type="RefSeq" id="YP_401720.3">
    <property type="nucleotide sequence ID" value="NC_007605.1"/>
</dbReference>
<dbReference type="SMR" id="P0C733"/>
<dbReference type="IntAct" id="P0C733">
    <property type="interactions" value="1"/>
</dbReference>
<dbReference type="GeneID" id="3783721"/>
<dbReference type="Proteomes" id="UP000007641">
    <property type="component" value="Genome"/>
</dbReference>
<gene>
    <name type="ORF">BNLF2b</name>
</gene>
<organismHost>
    <name type="scientific">Homo sapiens</name>
    <name type="common">Human</name>
    <dbReference type="NCBI Taxonomy" id="9606"/>
</organismHost>
<feature type="chain" id="PRO_0000382432" description="Uncharacterized protein BNLF2b">
    <location>
        <begin position="1"/>
        <end position="98"/>
    </location>
</feature>
<feature type="region of interest" description="Disordered" evidence="1">
    <location>
        <begin position="19"/>
        <end position="47"/>
    </location>
</feature>
<feature type="compositionally biased region" description="Basic residues" evidence="1">
    <location>
        <begin position="19"/>
        <end position="31"/>
    </location>
</feature>
<name>BNL2B_EBVG</name>
<protein>
    <recommendedName>
        <fullName>Uncharacterized protein BNLF2b</fullName>
    </recommendedName>
</protein>
<comment type="similarity">
    <text evidence="2">Belongs to the lymphocryptovirus BNLF2b family.</text>
</comment>
<sequence>MRPGRPLAGFYATLRRSFRRMSKRSKNKAKKERVPVEDRPPTPMPTSQRLIRRNALGGGVRPDAEDCIQRFHPLEPALGVSTKNFDLLSLRCELGWCG</sequence>
<organism>
    <name type="scientific">Epstein-Barr virus (strain GD1)</name>
    <name type="common">HHV-4</name>
    <name type="synonym">Human gammaherpesvirus 4</name>
    <dbReference type="NCBI Taxonomy" id="10376"/>
    <lineage>
        <taxon>Viruses</taxon>
        <taxon>Duplodnaviria</taxon>
        <taxon>Heunggongvirae</taxon>
        <taxon>Peploviricota</taxon>
        <taxon>Herviviricetes</taxon>
        <taxon>Herpesvirales</taxon>
        <taxon>Orthoherpesviridae</taxon>
        <taxon>Gammaherpesvirinae</taxon>
        <taxon>Lymphocryptovirus</taxon>
        <taxon>Lymphocryptovirus humangamma4</taxon>
    </lineage>
</organism>
<proteinExistence type="inferred from homology"/>
<accession>P0C733</accession>